<evidence type="ECO:0000255" key="1">
    <source>
        <dbReference type="HAMAP-Rule" id="MF_00149"/>
    </source>
</evidence>
<protein>
    <recommendedName>
        <fullName evidence="1">DNA mismatch repair protein MutL</fullName>
    </recommendedName>
</protein>
<sequence length="630" mass="71188">MSKIHELSPELTNQIAAGEVIERPASVVKELCENSLDAGSKRIRIDFIDAGLKQITVQDNGSGIAKDQIDLAFTRHATSKIATERDLFNISTLGFRGEALASIAAVSHVEVTTSNDNLGGVRAIFSGSEKKLQEDAASPKGTKITVSDLFFNTPARLKYLRSERTEILKIVDIVNRLALGHPDVSFTLTNNGKVLLKTNGRDDLRQDIANIYGRQLAEKMNILKGKSPDFEISGLISDPNTTRSNRNFISLLLNGRYIKNYRLTQAIMAGYGNKLRPRRYPIAVVKIELDPLLVDVNVHPTKQEVRLSKEQELERLLTTSISEALEQNNQIDSGLNNLLAPKKSTNIDQLKFNLNKDVVNTARPVEFTPQVEPDQNAEVHETGANFVSLDQVRNDDKYVITSTWNDNVNQQVQLSPFDEEKDMQGKDDSIISSGDEILANNLPELTYMGQTKSYLIAHHEEDLYLIDQVNAYRRLAYDQILQDLNSENISQQGLLSPLILDFSNVDYLKLKENLENLQEFGLFLEDFGQNSLILRTYPMWLQPDAEKNVRMILDLYLNQTEHDISKLKAQIAGEITMRQSARRRMLNPVEAQELLKELRNSSDPYQDFEGKIIIIQLSENDLNKMFKKDE</sequence>
<comment type="function">
    <text evidence="1">This protein is involved in the repair of mismatches in DNA. It is required for dam-dependent methyl-directed DNA mismatch repair. May act as a 'molecular matchmaker', a protein that promotes the formation of a stable complex between two or more DNA-binding proteins in an ATP-dependent manner without itself being part of a final effector complex.</text>
</comment>
<comment type="similarity">
    <text evidence="1">Belongs to the DNA mismatch repair MutL/HexB family.</text>
</comment>
<organism>
    <name type="scientific">Lactobacillus johnsonii (strain CNCM I-12250 / La1 / NCC 533)</name>
    <dbReference type="NCBI Taxonomy" id="257314"/>
    <lineage>
        <taxon>Bacteria</taxon>
        <taxon>Bacillati</taxon>
        <taxon>Bacillota</taxon>
        <taxon>Bacilli</taxon>
        <taxon>Lactobacillales</taxon>
        <taxon>Lactobacillaceae</taxon>
        <taxon>Lactobacillus</taxon>
    </lineage>
</organism>
<keyword id="KW-0227">DNA damage</keyword>
<keyword id="KW-0234">DNA repair</keyword>
<gene>
    <name evidence="1" type="primary">mutL</name>
    <name type="ordered locus">LJ_0466</name>
</gene>
<feature type="chain" id="PRO_1000010033" description="DNA mismatch repair protein MutL">
    <location>
        <begin position="1"/>
        <end position="630"/>
    </location>
</feature>
<proteinExistence type="inferred from homology"/>
<dbReference type="EMBL" id="AE017198">
    <property type="protein sequence ID" value="AAS08458.1"/>
    <property type="molecule type" value="Genomic_DNA"/>
</dbReference>
<dbReference type="RefSeq" id="WP_011161603.1">
    <property type="nucleotide sequence ID" value="NC_005362.1"/>
</dbReference>
<dbReference type="SMR" id="Q74KW0"/>
<dbReference type="GeneID" id="83569894"/>
<dbReference type="KEGG" id="ljo:LJ_0466"/>
<dbReference type="PATRIC" id="fig|257314.6.peg.493"/>
<dbReference type="eggNOG" id="COG0323">
    <property type="taxonomic scope" value="Bacteria"/>
</dbReference>
<dbReference type="HOGENOM" id="CLU_004131_4_1_9"/>
<dbReference type="Proteomes" id="UP000000581">
    <property type="component" value="Chromosome"/>
</dbReference>
<dbReference type="GO" id="GO:0032300">
    <property type="term" value="C:mismatch repair complex"/>
    <property type="evidence" value="ECO:0007669"/>
    <property type="project" value="InterPro"/>
</dbReference>
<dbReference type="GO" id="GO:0005524">
    <property type="term" value="F:ATP binding"/>
    <property type="evidence" value="ECO:0007669"/>
    <property type="project" value="InterPro"/>
</dbReference>
<dbReference type="GO" id="GO:0016887">
    <property type="term" value="F:ATP hydrolysis activity"/>
    <property type="evidence" value="ECO:0007669"/>
    <property type="project" value="InterPro"/>
</dbReference>
<dbReference type="GO" id="GO:0140664">
    <property type="term" value="F:ATP-dependent DNA damage sensor activity"/>
    <property type="evidence" value="ECO:0007669"/>
    <property type="project" value="InterPro"/>
</dbReference>
<dbReference type="GO" id="GO:0030983">
    <property type="term" value="F:mismatched DNA binding"/>
    <property type="evidence" value="ECO:0007669"/>
    <property type="project" value="InterPro"/>
</dbReference>
<dbReference type="GO" id="GO:0006298">
    <property type="term" value="P:mismatch repair"/>
    <property type="evidence" value="ECO:0007669"/>
    <property type="project" value="UniProtKB-UniRule"/>
</dbReference>
<dbReference type="CDD" id="cd16926">
    <property type="entry name" value="HATPase_MutL-MLH-PMS-like"/>
    <property type="match status" value="1"/>
</dbReference>
<dbReference type="CDD" id="cd00782">
    <property type="entry name" value="MutL_Trans"/>
    <property type="match status" value="1"/>
</dbReference>
<dbReference type="FunFam" id="3.30.565.10:FF:000003">
    <property type="entry name" value="DNA mismatch repair endonuclease MutL"/>
    <property type="match status" value="1"/>
</dbReference>
<dbReference type="Gene3D" id="3.30.230.10">
    <property type="match status" value="1"/>
</dbReference>
<dbReference type="Gene3D" id="3.30.565.10">
    <property type="entry name" value="Histidine kinase-like ATPase, C-terminal domain"/>
    <property type="match status" value="1"/>
</dbReference>
<dbReference type="Gene3D" id="3.30.1540.20">
    <property type="entry name" value="MutL, C-terminal domain, dimerisation subdomain"/>
    <property type="match status" value="1"/>
</dbReference>
<dbReference type="Gene3D" id="3.30.1370.100">
    <property type="entry name" value="MutL, C-terminal domain, regulatory subdomain"/>
    <property type="match status" value="1"/>
</dbReference>
<dbReference type="HAMAP" id="MF_00149">
    <property type="entry name" value="DNA_mis_repair"/>
    <property type="match status" value="1"/>
</dbReference>
<dbReference type="InterPro" id="IPR014762">
    <property type="entry name" value="DNA_mismatch_repair_CS"/>
</dbReference>
<dbReference type="InterPro" id="IPR020667">
    <property type="entry name" value="DNA_mismatch_repair_MutL"/>
</dbReference>
<dbReference type="InterPro" id="IPR013507">
    <property type="entry name" value="DNA_mismatch_S5_2-like"/>
</dbReference>
<dbReference type="InterPro" id="IPR036890">
    <property type="entry name" value="HATPase_C_sf"/>
</dbReference>
<dbReference type="InterPro" id="IPR002099">
    <property type="entry name" value="MutL/Mlh/PMS"/>
</dbReference>
<dbReference type="InterPro" id="IPR038973">
    <property type="entry name" value="MutL/Mlh/Pms-like"/>
</dbReference>
<dbReference type="InterPro" id="IPR014790">
    <property type="entry name" value="MutL_C"/>
</dbReference>
<dbReference type="InterPro" id="IPR042120">
    <property type="entry name" value="MutL_C_dimsub"/>
</dbReference>
<dbReference type="InterPro" id="IPR042121">
    <property type="entry name" value="MutL_C_regsub"/>
</dbReference>
<dbReference type="InterPro" id="IPR037198">
    <property type="entry name" value="MutL_C_sf"/>
</dbReference>
<dbReference type="InterPro" id="IPR020568">
    <property type="entry name" value="Ribosomal_Su5_D2-typ_SF"/>
</dbReference>
<dbReference type="InterPro" id="IPR014721">
    <property type="entry name" value="Ribsml_uS5_D2-typ_fold_subgr"/>
</dbReference>
<dbReference type="NCBIfam" id="TIGR00585">
    <property type="entry name" value="mutl"/>
    <property type="match status" value="1"/>
</dbReference>
<dbReference type="PANTHER" id="PTHR10073">
    <property type="entry name" value="DNA MISMATCH REPAIR PROTEIN MLH, PMS, MUTL"/>
    <property type="match status" value="1"/>
</dbReference>
<dbReference type="PANTHER" id="PTHR10073:SF12">
    <property type="entry name" value="DNA MISMATCH REPAIR PROTEIN MLH1"/>
    <property type="match status" value="1"/>
</dbReference>
<dbReference type="Pfam" id="PF01119">
    <property type="entry name" value="DNA_mis_repair"/>
    <property type="match status" value="1"/>
</dbReference>
<dbReference type="Pfam" id="PF13589">
    <property type="entry name" value="HATPase_c_3"/>
    <property type="match status" value="1"/>
</dbReference>
<dbReference type="Pfam" id="PF08676">
    <property type="entry name" value="MutL_C"/>
    <property type="match status" value="1"/>
</dbReference>
<dbReference type="SMART" id="SM01340">
    <property type="entry name" value="DNA_mis_repair"/>
    <property type="match status" value="1"/>
</dbReference>
<dbReference type="SMART" id="SM00853">
    <property type="entry name" value="MutL_C"/>
    <property type="match status" value="1"/>
</dbReference>
<dbReference type="SUPFAM" id="SSF55874">
    <property type="entry name" value="ATPase domain of HSP90 chaperone/DNA topoisomerase II/histidine kinase"/>
    <property type="match status" value="1"/>
</dbReference>
<dbReference type="SUPFAM" id="SSF118116">
    <property type="entry name" value="DNA mismatch repair protein MutL"/>
    <property type="match status" value="1"/>
</dbReference>
<dbReference type="SUPFAM" id="SSF54211">
    <property type="entry name" value="Ribosomal protein S5 domain 2-like"/>
    <property type="match status" value="1"/>
</dbReference>
<dbReference type="PROSITE" id="PS00058">
    <property type="entry name" value="DNA_MISMATCH_REPAIR_1"/>
    <property type="match status" value="1"/>
</dbReference>
<reference key="1">
    <citation type="journal article" date="2004" name="Proc. Natl. Acad. Sci. U.S.A.">
        <title>The genome sequence of the probiotic intestinal bacterium Lactobacillus johnsonii NCC 533.</title>
        <authorList>
            <person name="Pridmore R.D."/>
            <person name="Berger B."/>
            <person name="Desiere F."/>
            <person name="Vilanova D."/>
            <person name="Barretto C."/>
            <person name="Pittet A.-C."/>
            <person name="Zwahlen M.-C."/>
            <person name="Rouvet M."/>
            <person name="Altermann E."/>
            <person name="Barrangou R."/>
            <person name="Mollet B."/>
            <person name="Mercenier A."/>
            <person name="Klaenhammer T."/>
            <person name="Arigoni F."/>
            <person name="Schell M.A."/>
        </authorList>
    </citation>
    <scope>NUCLEOTIDE SEQUENCE [LARGE SCALE GENOMIC DNA]</scope>
    <source>
        <strain>CNCM I-1225 / La1 / NCC 533</strain>
    </source>
</reference>
<name>MUTL_LACJO</name>
<accession>Q74KW0</accession>